<accession>O28758</accession>
<sequence>MEIMDEIKVNLQKEVSLEEAERYAKNIASKYGDGILLSVHDSKTGYRAPEVYCCGEKPWEVYACNRGANLKISVNQFEFYFRIEVEGQAKY</sequence>
<feature type="chain" id="PRO_0000128016" description="Uncharacterized protein AF_1514">
    <location>
        <begin position="1"/>
        <end position="91"/>
    </location>
</feature>
<feature type="strand" evidence="1">
    <location>
        <begin position="5"/>
        <end position="7"/>
    </location>
</feature>
<feature type="helix" evidence="1">
    <location>
        <begin position="17"/>
        <end position="24"/>
    </location>
</feature>
<feature type="strand" evidence="1">
    <location>
        <begin position="33"/>
        <end position="41"/>
    </location>
</feature>
<feature type="strand" evidence="1">
    <location>
        <begin position="47"/>
        <end position="49"/>
    </location>
</feature>
<feature type="strand" evidence="1">
    <location>
        <begin position="53"/>
        <end position="57"/>
    </location>
</feature>
<feature type="helix" evidence="1">
    <location>
        <begin position="58"/>
        <end position="65"/>
    </location>
</feature>
<feature type="strand" evidence="1">
    <location>
        <begin position="70"/>
        <end position="74"/>
    </location>
</feature>
<feature type="strand" evidence="1">
    <location>
        <begin position="77"/>
        <end position="84"/>
    </location>
</feature>
<protein>
    <recommendedName>
        <fullName>Uncharacterized protein AF_1514</fullName>
    </recommendedName>
</protein>
<reference key="1">
    <citation type="journal article" date="1997" name="Nature">
        <title>The complete genome sequence of the hyperthermophilic, sulphate-reducing archaeon Archaeoglobus fulgidus.</title>
        <authorList>
            <person name="Klenk H.-P."/>
            <person name="Clayton R.A."/>
            <person name="Tomb J.-F."/>
            <person name="White O."/>
            <person name="Nelson K.E."/>
            <person name="Ketchum K.A."/>
            <person name="Dodson R.J."/>
            <person name="Gwinn M.L."/>
            <person name="Hickey E.K."/>
            <person name="Peterson J.D."/>
            <person name="Richardson D.L."/>
            <person name="Kerlavage A.R."/>
            <person name="Graham D.E."/>
            <person name="Kyrpides N.C."/>
            <person name="Fleischmann R.D."/>
            <person name="Quackenbush J."/>
            <person name="Lee N.H."/>
            <person name="Sutton G.G."/>
            <person name="Gill S.R."/>
            <person name="Kirkness E.F."/>
            <person name="Dougherty B.A."/>
            <person name="McKenney K."/>
            <person name="Adams M.D."/>
            <person name="Loftus B.J."/>
            <person name="Peterson S.N."/>
            <person name="Reich C.I."/>
            <person name="McNeil L.K."/>
            <person name="Badger J.H."/>
            <person name="Glodek A."/>
            <person name="Zhou L."/>
            <person name="Overbeek R."/>
            <person name="Gocayne J.D."/>
            <person name="Weidman J.F."/>
            <person name="McDonald L.A."/>
            <person name="Utterback T.R."/>
            <person name="Cotton M.D."/>
            <person name="Spriggs T."/>
            <person name="Artiach P."/>
            <person name="Kaine B.P."/>
            <person name="Sykes S.M."/>
            <person name="Sadow P.W."/>
            <person name="D'Andrea K.P."/>
            <person name="Bowman C."/>
            <person name="Fujii C."/>
            <person name="Garland S.A."/>
            <person name="Mason T.M."/>
            <person name="Olsen G.J."/>
            <person name="Fraser C.M."/>
            <person name="Smith H.O."/>
            <person name="Woese C.R."/>
            <person name="Venter J.C."/>
        </authorList>
    </citation>
    <scope>NUCLEOTIDE SEQUENCE [LARGE SCALE GENOMIC DNA]</scope>
    <source>
        <strain>ATCC 49558 / DSM 4304 / JCM 9628 / NBRC 100126 / VC-16</strain>
    </source>
</reference>
<evidence type="ECO:0007829" key="1">
    <source>
        <dbReference type="PDB" id="3C0F"/>
    </source>
</evidence>
<keyword id="KW-0002">3D-structure</keyword>
<keyword id="KW-1185">Reference proteome</keyword>
<name>Y1514_ARCFU</name>
<proteinExistence type="evidence at protein level"/>
<gene>
    <name type="ordered locus">AF_1514</name>
</gene>
<organism>
    <name type="scientific">Archaeoglobus fulgidus (strain ATCC 49558 / DSM 4304 / JCM 9628 / NBRC 100126 / VC-16)</name>
    <dbReference type="NCBI Taxonomy" id="224325"/>
    <lineage>
        <taxon>Archaea</taxon>
        <taxon>Methanobacteriati</taxon>
        <taxon>Methanobacteriota</taxon>
        <taxon>Archaeoglobi</taxon>
        <taxon>Archaeoglobales</taxon>
        <taxon>Archaeoglobaceae</taxon>
        <taxon>Archaeoglobus</taxon>
    </lineage>
</organism>
<dbReference type="EMBL" id="AE000782">
    <property type="protein sequence ID" value="AAB89739.1"/>
    <property type="molecule type" value="Genomic_DNA"/>
</dbReference>
<dbReference type="PIR" id="A69439">
    <property type="entry name" value="A69439"/>
</dbReference>
<dbReference type="PDB" id="3C0F">
    <property type="method" value="X-ray"/>
    <property type="resolution" value="1.80 A"/>
    <property type="chains" value="B=1-91"/>
</dbReference>
<dbReference type="PDBsum" id="3C0F"/>
<dbReference type="SMR" id="O28758"/>
<dbReference type="STRING" id="224325.AF_1514"/>
<dbReference type="PaxDb" id="224325-AF_1514"/>
<dbReference type="DNASU" id="1484742"/>
<dbReference type="EnsemblBacteria" id="AAB89739">
    <property type="protein sequence ID" value="AAB89739"/>
    <property type="gene ID" value="AF_1514"/>
</dbReference>
<dbReference type="KEGG" id="afu:AF_1514"/>
<dbReference type="eggNOG" id="arCOG10394">
    <property type="taxonomic scope" value="Archaea"/>
</dbReference>
<dbReference type="HOGENOM" id="CLU_180631_1_0_2"/>
<dbReference type="EvolutionaryTrace" id="O28758"/>
<dbReference type="Proteomes" id="UP000002199">
    <property type="component" value="Chromosome"/>
</dbReference>
<dbReference type="Gene3D" id="3.30.1490.340">
    <property type="match status" value="1"/>
</dbReference>
<dbReference type="InterPro" id="IPR041145">
    <property type="entry name" value="DUF5619"/>
</dbReference>
<dbReference type="Pfam" id="PF18505">
    <property type="entry name" value="DUF5619"/>
    <property type="match status" value="1"/>
</dbReference>